<dbReference type="EMBL" id="AE016795">
    <property type="protein sequence ID" value="AAO09172.1"/>
    <property type="molecule type" value="Genomic_DNA"/>
</dbReference>
<dbReference type="RefSeq" id="WP_011078739.1">
    <property type="nucleotide sequence ID" value="NC_004459.3"/>
</dbReference>
<dbReference type="SMR" id="Q8DED5"/>
<dbReference type="KEGG" id="vvu:VV1_0660"/>
<dbReference type="HOGENOM" id="CLU_009039_2_0_6"/>
<dbReference type="Proteomes" id="UP000002275">
    <property type="component" value="Chromosome 1"/>
</dbReference>
<dbReference type="GO" id="GO:0009279">
    <property type="term" value="C:cell outer membrane"/>
    <property type="evidence" value="ECO:0007669"/>
    <property type="project" value="UniProtKB-SubCell"/>
</dbReference>
<dbReference type="GO" id="GO:1990351">
    <property type="term" value="C:transporter complex"/>
    <property type="evidence" value="ECO:0007669"/>
    <property type="project" value="TreeGrafter"/>
</dbReference>
<dbReference type="GO" id="GO:0043165">
    <property type="term" value="P:Gram-negative-bacterium-type cell outer membrane assembly"/>
    <property type="evidence" value="ECO:0007669"/>
    <property type="project" value="UniProtKB-UniRule"/>
</dbReference>
<dbReference type="GO" id="GO:0015920">
    <property type="term" value="P:lipopolysaccharide transport"/>
    <property type="evidence" value="ECO:0007669"/>
    <property type="project" value="InterPro"/>
</dbReference>
<dbReference type="Gene3D" id="2.60.450.10">
    <property type="entry name" value="Lipopolysaccharide (LPS) transport protein A like domain"/>
    <property type="match status" value="1"/>
</dbReference>
<dbReference type="HAMAP" id="MF_01411">
    <property type="entry name" value="LPS_assembly_LptD"/>
    <property type="match status" value="1"/>
</dbReference>
<dbReference type="InterPro" id="IPR020889">
    <property type="entry name" value="LipoPS_assembly_LptD"/>
</dbReference>
<dbReference type="InterPro" id="IPR050218">
    <property type="entry name" value="LptD"/>
</dbReference>
<dbReference type="InterPro" id="IPR007543">
    <property type="entry name" value="LptD_C"/>
</dbReference>
<dbReference type="InterPro" id="IPR005653">
    <property type="entry name" value="OstA-like_N"/>
</dbReference>
<dbReference type="NCBIfam" id="NF002997">
    <property type="entry name" value="PRK03761.1"/>
    <property type="match status" value="1"/>
</dbReference>
<dbReference type="PANTHER" id="PTHR30189">
    <property type="entry name" value="LPS-ASSEMBLY PROTEIN"/>
    <property type="match status" value="1"/>
</dbReference>
<dbReference type="PANTHER" id="PTHR30189:SF1">
    <property type="entry name" value="LPS-ASSEMBLY PROTEIN LPTD"/>
    <property type="match status" value="1"/>
</dbReference>
<dbReference type="Pfam" id="PF04453">
    <property type="entry name" value="LptD"/>
    <property type="match status" value="1"/>
</dbReference>
<dbReference type="Pfam" id="PF03968">
    <property type="entry name" value="LptD_N"/>
    <property type="match status" value="1"/>
</dbReference>
<reference key="1">
    <citation type="submission" date="2002-12" db="EMBL/GenBank/DDBJ databases">
        <title>Complete genome sequence of Vibrio vulnificus CMCP6.</title>
        <authorList>
            <person name="Rhee J.H."/>
            <person name="Kim S.Y."/>
            <person name="Chung S.S."/>
            <person name="Kim J.J."/>
            <person name="Moon Y.H."/>
            <person name="Jeong H."/>
            <person name="Choy H.E."/>
        </authorList>
    </citation>
    <scope>NUCLEOTIDE SEQUENCE [LARGE SCALE GENOMIC DNA]</scope>
    <source>
        <strain>CMCP6</strain>
    </source>
</reference>
<organism>
    <name type="scientific">Vibrio vulnificus (strain CMCP6)</name>
    <dbReference type="NCBI Taxonomy" id="216895"/>
    <lineage>
        <taxon>Bacteria</taxon>
        <taxon>Pseudomonadati</taxon>
        <taxon>Pseudomonadota</taxon>
        <taxon>Gammaproteobacteria</taxon>
        <taxon>Vibrionales</taxon>
        <taxon>Vibrionaceae</taxon>
        <taxon>Vibrio</taxon>
    </lineage>
</organism>
<accession>Q8DED5</accession>
<name>LPTD_VIBVU</name>
<keyword id="KW-0998">Cell outer membrane</keyword>
<keyword id="KW-0472">Membrane</keyword>
<keyword id="KW-0732">Signal</keyword>
<protein>
    <recommendedName>
        <fullName evidence="1">LPS-assembly protein LptD</fullName>
    </recommendedName>
</protein>
<sequence>MQHFSRTFLAASIATALFAPYAQAEAILNNSVQEMPTTDQCLVDAEKNDANAEIVIQADNLQAINGDKAIYSGDVEVTQGNKKITAESVTLHQQENIVVAEGNVTFNDGEVKASSSKVTNNMTSETFSLENTEYQFLCQQGRGQAAYIAKTGQAVYELEDGSITSCPADDNAWRLVASSIEVDQNEETATFYHPRFEVLDVPVFYAPYLTLPIGNTRKTGFLFPSVNYGSSDGLEIEVPFYWNIAPNYDLTLTTLYMQQRGVKQDADFRYLSDGWGAGELKGEYLPGDEKYNDEDRWGYQYKHDGIINKQWLVSLDYSQVSDIDYFRDLSSDLGNREDGQLMQQGKVAYRSDFWDMSLQVRDFQILLQDNNQPYRLLPQVKFNFYTPLLGNYLNFDVKSELTQFDIQDASKPNALRAHVEPGLTIPLSTSWATWTTEARLLATYYQQDLDRLTDPTLKSQLDETVARVIPEYRSHARIYLEREAKLFEGYTQSLEPQIQYLYVPEEEQGNIYNYDTTLLQTDYYGLFRSRKYSSIDKIAAANQLSYGASTRFFDDEYKERLNISFGQIYYIDKKTKLTGNQEETSNYSSWAVETDFNYEDFLFYHGGIQYDIDLNAMQLANSTLEYQFTDGFIQGNYRYVTKDYIEDTISFDELDKITRKGISQAGIVGAYNINRHWSASGQYYYDLTEEIDLEWMASLRYQSDCWYIGFTYTNQLVKWRNDVVGGDSNNPVYDTNISVNFGIQGFATKNKAETAAKELDSTDNAITYGRPFYLNN</sequence>
<proteinExistence type="inferred from homology"/>
<evidence type="ECO:0000255" key="1">
    <source>
        <dbReference type="HAMAP-Rule" id="MF_01411"/>
    </source>
</evidence>
<feature type="signal peptide" evidence="1">
    <location>
        <begin position="1"/>
        <end position="24"/>
    </location>
</feature>
<feature type="chain" id="PRO_0000020294" description="LPS-assembly protein LptD">
    <location>
        <begin position="25"/>
        <end position="776"/>
    </location>
</feature>
<comment type="function">
    <text evidence="1">Together with LptE, is involved in the assembly of lipopolysaccharide (LPS) at the surface of the outer membrane.</text>
</comment>
<comment type="subunit">
    <text evidence="1">Component of the lipopolysaccharide transport and assembly complex. Interacts with LptE and LptA.</text>
</comment>
<comment type="subcellular location">
    <subcellularLocation>
        <location evidence="1">Cell outer membrane</location>
    </subcellularLocation>
</comment>
<comment type="similarity">
    <text evidence="1">Belongs to the LptD family.</text>
</comment>
<gene>
    <name evidence="1" type="primary">lptD</name>
    <name type="synonym">imp</name>
    <name type="synonym">ostA</name>
    <name type="ordered locus">VV1_0660</name>
</gene>